<comment type="function">
    <text evidence="1">Associates with the EF-Tu.GDP complex and induces the exchange of GDP to GTP. It remains bound to the aminoacyl-tRNA.EF-Tu.GTP complex up to the GTP hydrolysis stage on the ribosome.</text>
</comment>
<comment type="subcellular location">
    <subcellularLocation>
        <location evidence="1">Cytoplasm</location>
    </subcellularLocation>
</comment>
<comment type="similarity">
    <text evidence="1">Belongs to the EF-Ts family.</text>
</comment>
<comment type="sequence caution" evidence="2">
    <conflict type="erroneous initiation">
        <sequence resource="EMBL-CDS" id="AAP56438"/>
    </conflict>
    <text>Extended N-terminus.</text>
</comment>
<gene>
    <name evidence="1" type="primary">tsf</name>
    <name type="ordered locus">MYCGA0880</name>
    <name type="ORF">MGA_0782</name>
</gene>
<protein>
    <recommendedName>
        <fullName evidence="1">Elongation factor Ts</fullName>
        <shortName evidence="1">EF-Ts</shortName>
    </recommendedName>
</protein>
<sequence>MASITELIKQLRASTQAGFMDCKKALEATNNDIDQAIKWLRENGIAKAAKKVDNVASEGVIKLKLADQKATILEINSQTDFVTKNDQFVAFSNELVDLVHKHETTDVAKIEQLKLASGSTVAETQIHLTAIIGEKISLRRVAFVKEEANSSLATYLHSNSRIGVIVKTSKTDDKEFLKHLAMHIAASNPKFVSQKDVSADFIAKEREIAAAQAQSENKPKEFIDRIVDGRINKVLEEVCLVNQKFLVNQEQTVQQAAQAKKVEILSFIRYEVGEGIEKQVSNFADEVKAQMK</sequence>
<accession>Q7NC21</accession>
<feature type="chain" id="PRO_0000161150" description="Elongation factor Ts">
    <location>
        <begin position="1"/>
        <end position="292"/>
    </location>
</feature>
<feature type="region of interest" description="Involved in Mg(2+) ion dislocation from EF-Tu" evidence="1">
    <location>
        <begin position="79"/>
        <end position="82"/>
    </location>
</feature>
<name>EFTS_MYCGA</name>
<evidence type="ECO:0000255" key="1">
    <source>
        <dbReference type="HAMAP-Rule" id="MF_00050"/>
    </source>
</evidence>
<evidence type="ECO:0000305" key="2"/>
<dbReference type="EMBL" id="AE015450">
    <property type="protein sequence ID" value="AAP56438.2"/>
    <property type="status" value="ALT_INIT"/>
    <property type="molecule type" value="Genomic_DNA"/>
</dbReference>
<dbReference type="SMR" id="Q7NC21"/>
<dbReference type="KEGG" id="mga:MGA_0782"/>
<dbReference type="HOGENOM" id="CLU_047155_0_2_14"/>
<dbReference type="Proteomes" id="UP000001418">
    <property type="component" value="Chromosome"/>
</dbReference>
<dbReference type="GO" id="GO:0005737">
    <property type="term" value="C:cytoplasm"/>
    <property type="evidence" value="ECO:0007669"/>
    <property type="project" value="UniProtKB-SubCell"/>
</dbReference>
<dbReference type="GO" id="GO:0003746">
    <property type="term" value="F:translation elongation factor activity"/>
    <property type="evidence" value="ECO:0007669"/>
    <property type="project" value="UniProtKB-UniRule"/>
</dbReference>
<dbReference type="CDD" id="cd14275">
    <property type="entry name" value="UBA_EF-Ts"/>
    <property type="match status" value="1"/>
</dbReference>
<dbReference type="FunFam" id="1.10.286.20:FF:000001">
    <property type="entry name" value="Elongation factor Ts"/>
    <property type="match status" value="1"/>
</dbReference>
<dbReference type="FunFam" id="1.10.8.10:FF:000001">
    <property type="entry name" value="Elongation factor Ts"/>
    <property type="match status" value="1"/>
</dbReference>
<dbReference type="Gene3D" id="1.10.286.20">
    <property type="match status" value="1"/>
</dbReference>
<dbReference type="Gene3D" id="1.10.8.10">
    <property type="entry name" value="DNA helicase RuvA subunit, C-terminal domain"/>
    <property type="match status" value="1"/>
</dbReference>
<dbReference type="Gene3D" id="3.30.479.20">
    <property type="entry name" value="Elongation factor Ts, dimerisation domain"/>
    <property type="match status" value="2"/>
</dbReference>
<dbReference type="HAMAP" id="MF_00050">
    <property type="entry name" value="EF_Ts"/>
    <property type="match status" value="1"/>
</dbReference>
<dbReference type="InterPro" id="IPR036402">
    <property type="entry name" value="EF-Ts_dimer_sf"/>
</dbReference>
<dbReference type="InterPro" id="IPR001816">
    <property type="entry name" value="Transl_elong_EFTs/EF1B"/>
</dbReference>
<dbReference type="InterPro" id="IPR014039">
    <property type="entry name" value="Transl_elong_EFTs/EF1B_dimer"/>
</dbReference>
<dbReference type="InterPro" id="IPR018101">
    <property type="entry name" value="Transl_elong_Ts_CS"/>
</dbReference>
<dbReference type="InterPro" id="IPR009060">
    <property type="entry name" value="UBA-like_sf"/>
</dbReference>
<dbReference type="NCBIfam" id="TIGR00116">
    <property type="entry name" value="tsf"/>
    <property type="match status" value="1"/>
</dbReference>
<dbReference type="PANTHER" id="PTHR11741">
    <property type="entry name" value="ELONGATION FACTOR TS"/>
    <property type="match status" value="1"/>
</dbReference>
<dbReference type="PANTHER" id="PTHR11741:SF0">
    <property type="entry name" value="ELONGATION FACTOR TS, MITOCHONDRIAL"/>
    <property type="match status" value="1"/>
</dbReference>
<dbReference type="Pfam" id="PF00889">
    <property type="entry name" value="EF_TS"/>
    <property type="match status" value="1"/>
</dbReference>
<dbReference type="SUPFAM" id="SSF54713">
    <property type="entry name" value="Elongation factor Ts (EF-Ts), dimerisation domain"/>
    <property type="match status" value="2"/>
</dbReference>
<dbReference type="SUPFAM" id="SSF46934">
    <property type="entry name" value="UBA-like"/>
    <property type="match status" value="1"/>
</dbReference>
<dbReference type="PROSITE" id="PS01126">
    <property type="entry name" value="EF_TS_1"/>
    <property type="match status" value="1"/>
</dbReference>
<dbReference type="PROSITE" id="PS01127">
    <property type="entry name" value="EF_TS_2"/>
    <property type="match status" value="1"/>
</dbReference>
<organism>
    <name type="scientific">Mycoplasmoides gallisepticum (strain R(low / passage 15 / clone 2))</name>
    <name type="common">Mycoplasma gallisepticum</name>
    <dbReference type="NCBI Taxonomy" id="710127"/>
    <lineage>
        <taxon>Bacteria</taxon>
        <taxon>Bacillati</taxon>
        <taxon>Mycoplasmatota</taxon>
        <taxon>Mycoplasmoidales</taxon>
        <taxon>Mycoplasmoidaceae</taxon>
        <taxon>Mycoplasmoides</taxon>
    </lineage>
</organism>
<keyword id="KW-0963">Cytoplasm</keyword>
<keyword id="KW-0251">Elongation factor</keyword>
<keyword id="KW-0648">Protein biosynthesis</keyword>
<keyword id="KW-1185">Reference proteome</keyword>
<proteinExistence type="inferred from homology"/>
<reference key="1">
    <citation type="journal article" date="2003" name="Microbiology">
        <title>The complete genome sequence of the avian pathogen Mycoplasma gallisepticum strain R(low).</title>
        <authorList>
            <person name="Papazisi L."/>
            <person name="Gorton T.S."/>
            <person name="Kutish G."/>
            <person name="Markham P.F."/>
            <person name="Browning G.F."/>
            <person name="Nguyen D.K."/>
            <person name="Swartzell S."/>
            <person name="Madan A."/>
            <person name="Mahairas G."/>
            <person name="Geary S.J."/>
        </authorList>
    </citation>
    <scope>NUCLEOTIDE SEQUENCE [LARGE SCALE GENOMIC DNA]</scope>
    <source>
        <strain>R(low / passage 15 / clone 2)</strain>
    </source>
</reference>